<proteinExistence type="inferred from homology"/>
<sequence length="125" mass="14440">MLLSLRKNNEFRTVYRRGKSYANDLLVLYVYPNRKNVTKDGERFNKVGVSVSKKVGKSVVRSRVKRLILENYRLNSSELKEGYDFVFIARVAINGKDFKQVGKAMNNLIKKAGLRDNEKIVHSND</sequence>
<accession>Q0SPP9</accession>
<name>RNPA_CLOPS</name>
<gene>
    <name evidence="1" type="primary">rnpA</name>
    <name type="ordered locus">CPR_2673</name>
</gene>
<dbReference type="EC" id="3.1.26.5" evidence="1"/>
<dbReference type="EMBL" id="CP000312">
    <property type="protein sequence ID" value="ABG86979.1"/>
    <property type="molecule type" value="Genomic_DNA"/>
</dbReference>
<dbReference type="RefSeq" id="WP_003450986.1">
    <property type="nucleotide sequence ID" value="NZ_CAXVKH010000018.1"/>
</dbReference>
<dbReference type="SMR" id="Q0SPP9"/>
<dbReference type="GeneID" id="93000726"/>
<dbReference type="KEGG" id="cpr:CPR_2673"/>
<dbReference type="Proteomes" id="UP000001824">
    <property type="component" value="Chromosome"/>
</dbReference>
<dbReference type="GO" id="GO:0030677">
    <property type="term" value="C:ribonuclease P complex"/>
    <property type="evidence" value="ECO:0007669"/>
    <property type="project" value="TreeGrafter"/>
</dbReference>
<dbReference type="GO" id="GO:0042781">
    <property type="term" value="F:3'-tRNA processing endoribonuclease activity"/>
    <property type="evidence" value="ECO:0007669"/>
    <property type="project" value="TreeGrafter"/>
</dbReference>
<dbReference type="GO" id="GO:0004526">
    <property type="term" value="F:ribonuclease P activity"/>
    <property type="evidence" value="ECO:0007669"/>
    <property type="project" value="UniProtKB-UniRule"/>
</dbReference>
<dbReference type="GO" id="GO:0000049">
    <property type="term" value="F:tRNA binding"/>
    <property type="evidence" value="ECO:0007669"/>
    <property type="project" value="UniProtKB-UniRule"/>
</dbReference>
<dbReference type="GO" id="GO:0001682">
    <property type="term" value="P:tRNA 5'-leader removal"/>
    <property type="evidence" value="ECO:0007669"/>
    <property type="project" value="UniProtKB-UniRule"/>
</dbReference>
<dbReference type="Gene3D" id="3.30.230.10">
    <property type="match status" value="1"/>
</dbReference>
<dbReference type="HAMAP" id="MF_00227">
    <property type="entry name" value="RNase_P"/>
    <property type="match status" value="1"/>
</dbReference>
<dbReference type="InterPro" id="IPR020568">
    <property type="entry name" value="Ribosomal_Su5_D2-typ_SF"/>
</dbReference>
<dbReference type="InterPro" id="IPR014721">
    <property type="entry name" value="Ribsml_uS5_D2-typ_fold_subgr"/>
</dbReference>
<dbReference type="InterPro" id="IPR000100">
    <property type="entry name" value="RNase_P"/>
</dbReference>
<dbReference type="NCBIfam" id="TIGR00188">
    <property type="entry name" value="rnpA"/>
    <property type="match status" value="1"/>
</dbReference>
<dbReference type="PANTHER" id="PTHR33992">
    <property type="entry name" value="RIBONUCLEASE P PROTEIN COMPONENT"/>
    <property type="match status" value="1"/>
</dbReference>
<dbReference type="PANTHER" id="PTHR33992:SF1">
    <property type="entry name" value="RIBONUCLEASE P PROTEIN COMPONENT"/>
    <property type="match status" value="1"/>
</dbReference>
<dbReference type="Pfam" id="PF00825">
    <property type="entry name" value="Ribonuclease_P"/>
    <property type="match status" value="1"/>
</dbReference>
<dbReference type="SUPFAM" id="SSF54211">
    <property type="entry name" value="Ribosomal protein S5 domain 2-like"/>
    <property type="match status" value="1"/>
</dbReference>
<reference key="1">
    <citation type="journal article" date="2006" name="Genome Res.">
        <title>Skewed genomic variability in strains of the toxigenic bacterial pathogen, Clostridium perfringens.</title>
        <authorList>
            <person name="Myers G.S.A."/>
            <person name="Rasko D.A."/>
            <person name="Cheung J.K."/>
            <person name="Ravel J."/>
            <person name="Seshadri R."/>
            <person name="DeBoy R.T."/>
            <person name="Ren Q."/>
            <person name="Varga J."/>
            <person name="Awad M.M."/>
            <person name="Brinkac L.M."/>
            <person name="Daugherty S.C."/>
            <person name="Haft D.H."/>
            <person name="Dodson R.J."/>
            <person name="Madupu R."/>
            <person name="Nelson W.C."/>
            <person name="Rosovitz M.J."/>
            <person name="Sullivan S.A."/>
            <person name="Khouri H."/>
            <person name="Dimitrov G.I."/>
            <person name="Watkins K.L."/>
            <person name="Mulligan S."/>
            <person name="Benton J."/>
            <person name="Radune D."/>
            <person name="Fisher D.J."/>
            <person name="Atkins H.S."/>
            <person name="Hiscox T."/>
            <person name="Jost B.H."/>
            <person name="Billington S.J."/>
            <person name="Songer J.G."/>
            <person name="McClane B.A."/>
            <person name="Titball R.W."/>
            <person name="Rood J.I."/>
            <person name="Melville S.B."/>
            <person name="Paulsen I.T."/>
        </authorList>
    </citation>
    <scope>NUCLEOTIDE SEQUENCE [LARGE SCALE GENOMIC DNA]</scope>
    <source>
        <strain>SM101 / Type A</strain>
    </source>
</reference>
<comment type="function">
    <text evidence="1">RNaseP catalyzes the removal of the 5'-leader sequence from pre-tRNA to produce the mature 5'-terminus. It can also cleave other RNA substrates such as 4.5S RNA. The protein component plays an auxiliary but essential role in vivo by binding to the 5'-leader sequence and broadening the substrate specificity of the ribozyme.</text>
</comment>
<comment type="catalytic activity">
    <reaction evidence="1">
        <text>Endonucleolytic cleavage of RNA, removing 5'-extranucleotides from tRNA precursor.</text>
        <dbReference type="EC" id="3.1.26.5"/>
    </reaction>
</comment>
<comment type="subunit">
    <text evidence="1">Consists of a catalytic RNA component (M1 or rnpB) and a protein subunit.</text>
</comment>
<comment type="similarity">
    <text evidence="1">Belongs to the RnpA family.</text>
</comment>
<keyword id="KW-0255">Endonuclease</keyword>
<keyword id="KW-0378">Hydrolase</keyword>
<keyword id="KW-0540">Nuclease</keyword>
<keyword id="KW-0694">RNA-binding</keyword>
<keyword id="KW-0819">tRNA processing</keyword>
<feature type="chain" id="PRO_1000021400" description="Ribonuclease P protein component">
    <location>
        <begin position="1"/>
        <end position="125"/>
    </location>
</feature>
<protein>
    <recommendedName>
        <fullName evidence="1">Ribonuclease P protein component</fullName>
        <shortName evidence="1">RNase P protein</shortName>
        <shortName evidence="1">RNaseP protein</shortName>
        <ecNumber evidence="1">3.1.26.5</ecNumber>
    </recommendedName>
    <alternativeName>
        <fullName evidence="1">Protein C5</fullName>
    </alternativeName>
</protein>
<evidence type="ECO:0000255" key="1">
    <source>
        <dbReference type="HAMAP-Rule" id="MF_00227"/>
    </source>
</evidence>
<organism>
    <name type="scientific">Clostridium perfringens (strain SM101 / Type A)</name>
    <dbReference type="NCBI Taxonomy" id="289380"/>
    <lineage>
        <taxon>Bacteria</taxon>
        <taxon>Bacillati</taxon>
        <taxon>Bacillota</taxon>
        <taxon>Clostridia</taxon>
        <taxon>Eubacteriales</taxon>
        <taxon>Clostridiaceae</taxon>
        <taxon>Clostridium</taxon>
    </lineage>
</organism>